<organism>
    <name type="scientific">Clostridium novyi (strain NT)</name>
    <dbReference type="NCBI Taxonomy" id="386415"/>
    <lineage>
        <taxon>Bacteria</taxon>
        <taxon>Bacillati</taxon>
        <taxon>Bacillota</taxon>
        <taxon>Clostridia</taxon>
        <taxon>Eubacteriales</taxon>
        <taxon>Clostridiaceae</taxon>
        <taxon>Clostridium</taxon>
    </lineage>
</organism>
<evidence type="ECO:0000255" key="1">
    <source>
        <dbReference type="HAMAP-Rule" id="MF_01864"/>
    </source>
</evidence>
<evidence type="ECO:0000255" key="2">
    <source>
        <dbReference type="PROSITE-ProRule" id="PRU01266"/>
    </source>
</evidence>
<reference key="1">
    <citation type="journal article" date="2006" name="Nat. Biotechnol.">
        <title>The genome and transcriptomes of the anti-tumor agent Clostridium novyi-NT.</title>
        <authorList>
            <person name="Bettegowda C."/>
            <person name="Huang X."/>
            <person name="Lin J."/>
            <person name="Cheong I."/>
            <person name="Kohli M."/>
            <person name="Szabo S.A."/>
            <person name="Zhang X."/>
            <person name="Diaz L.A. Jr."/>
            <person name="Velculescu V.E."/>
            <person name="Parmigiani G."/>
            <person name="Kinzler K.W."/>
            <person name="Vogelstein B."/>
            <person name="Zhou S."/>
        </authorList>
    </citation>
    <scope>NUCLEOTIDE SEQUENCE [LARGE SCALE GENOMIC DNA]</scope>
    <source>
        <strain>NT</strain>
    </source>
</reference>
<accession>A0Q0M5</accession>
<gene>
    <name evidence="1" type="primary">miaB</name>
    <name type="ordered locus">NT01CX_2104</name>
</gene>
<sequence>MEDLVLDNNTKNIYNKRFFISTWGCQMNEEDSEKISGLLKGIGYTRTDIRDEADVVIFNTCCVRENAEQKVYGHLGELKALKRKNPNLILIVTGCMMQQKGMPEKVMEKFPHVDIIAGTYNSYKLPEYIERVKTEGNSIIEIWDKEKGIVEGLPVDRKSDIKAFVTIMYGCNNFCSYCIVPYVRGRERSRDPQNIIDEIKDLVSKGYKEITLLGQNVNSYGKGLEPEINFATLLRMVNKIDGLERIRFMTSHPKDVSDELIKAMAECEKVCEQGHFALQSGSTEILQKMNRKYTREDYLTLVKKLRKAMPNVGISTDIIIGYPGETEKDFEDTLSIVKEIEFDSAFTFIYSKREGTPAAKLEDQVPEDVKHTRFNKLVEAVNEIMARKNKEFEGKTVEVLVEGPSKNDDTKLMGRTRSGKLVNFNGCLDQVGKLVNIKITKANSFSLTGEII</sequence>
<dbReference type="EC" id="2.8.4.3" evidence="1"/>
<dbReference type="EMBL" id="CP000382">
    <property type="protein sequence ID" value="ABK61318.1"/>
    <property type="molecule type" value="Genomic_DNA"/>
</dbReference>
<dbReference type="RefSeq" id="WP_011722177.1">
    <property type="nucleotide sequence ID" value="NC_008593.1"/>
</dbReference>
<dbReference type="SMR" id="A0Q0M5"/>
<dbReference type="STRING" id="386415.NT01CX_2104"/>
<dbReference type="KEGG" id="cno:NT01CX_2104"/>
<dbReference type="eggNOG" id="COG0621">
    <property type="taxonomic scope" value="Bacteria"/>
</dbReference>
<dbReference type="HOGENOM" id="CLU_018697_2_0_9"/>
<dbReference type="Proteomes" id="UP000008220">
    <property type="component" value="Chromosome"/>
</dbReference>
<dbReference type="GO" id="GO:0005829">
    <property type="term" value="C:cytosol"/>
    <property type="evidence" value="ECO:0007669"/>
    <property type="project" value="TreeGrafter"/>
</dbReference>
<dbReference type="GO" id="GO:0051539">
    <property type="term" value="F:4 iron, 4 sulfur cluster binding"/>
    <property type="evidence" value="ECO:0007669"/>
    <property type="project" value="UniProtKB-UniRule"/>
</dbReference>
<dbReference type="GO" id="GO:0046872">
    <property type="term" value="F:metal ion binding"/>
    <property type="evidence" value="ECO:0007669"/>
    <property type="project" value="UniProtKB-KW"/>
</dbReference>
<dbReference type="GO" id="GO:0035597">
    <property type="term" value="F:N6-isopentenyladenosine methylthiotransferase activity"/>
    <property type="evidence" value="ECO:0007669"/>
    <property type="project" value="TreeGrafter"/>
</dbReference>
<dbReference type="CDD" id="cd01335">
    <property type="entry name" value="Radical_SAM"/>
    <property type="match status" value="1"/>
</dbReference>
<dbReference type="FunFam" id="3.40.50.12160:FF:000006">
    <property type="entry name" value="tRNA-2-methylthio-N(6)-dimethylallyladenosine synthase"/>
    <property type="match status" value="1"/>
</dbReference>
<dbReference type="FunFam" id="3.80.30.20:FF:000001">
    <property type="entry name" value="tRNA-2-methylthio-N(6)-dimethylallyladenosine synthase 2"/>
    <property type="match status" value="1"/>
</dbReference>
<dbReference type="Gene3D" id="3.40.50.12160">
    <property type="entry name" value="Methylthiotransferase, N-terminal domain"/>
    <property type="match status" value="1"/>
</dbReference>
<dbReference type="Gene3D" id="3.80.30.20">
    <property type="entry name" value="tm_1862 like domain"/>
    <property type="match status" value="1"/>
</dbReference>
<dbReference type="HAMAP" id="MF_01864">
    <property type="entry name" value="tRNA_metthiotr_MiaB"/>
    <property type="match status" value="1"/>
</dbReference>
<dbReference type="InterPro" id="IPR006638">
    <property type="entry name" value="Elp3/MiaA/NifB-like_rSAM"/>
</dbReference>
<dbReference type="InterPro" id="IPR005839">
    <property type="entry name" value="Methylthiotransferase"/>
</dbReference>
<dbReference type="InterPro" id="IPR020612">
    <property type="entry name" value="Methylthiotransferase_CS"/>
</dbReference>
<dbReference type="InterPro" id="IPR013848">
    <property type="entry name" value="Methylthiotransferase_N"/>
</dbReference>
<dbReference type="InterPro" id="IPR038135">
    <property type="entry name" value="Methylthiotransferase_N_sf"/>
</dbReference>
<dbReference type="InterPro" id="IPR006463">
    <property type="entry name" value="MiaB_methiolase"/>
</dbReference>
<dbReference type="InterPro" id="IPR007197">
    <property type="entry name" value="rSAM"/>
</dbReference>
<dbReference type="InterPro" id="IPR023404">
    <property type="entry name" value="rSAM_horseshoe"/>
</dbReference>
<dbReference type="InterPro" id="IPR002792">
    <property type="entry name" value="TRAM_dom"/>
</dbReference>
<dbReference type="NCBIfam" id="TIGR01574">
    <property type="entry name" value="miaB-methiolase"/>
    <property type="match status" value="1"/>
</dbReference>
<dbReference type="NCBIfam" id="TIGR00089">
    <property type="entry name" value="MiaB/RimO family radical SAM methylthiotransferase"/>
    <property type="match status" value="1"/>
</dbReference>
<dbReference type="PANTHER" id="PTHR43020">
    <property type="entry name" value="CDK5 REGULATORY SUBUNIT-ASSOCIATED PROTEIN 1"/>
    <property type="match status" value="1"/>
</dbReference>
<dbReference type="PANTHER" id="PTHR43020:SF2">
    <property type="entry name" value="MITOCHONDRIAL TRNA METHYLTHIOTRANSFERASE CDK5RAP1"/>
    <property type="match status" value="1"/>
</dbReference>
<dbReference type="Pfam" id="PF04055">
    <property type="entry name" value="Radical_SAM"/>
    <property type="match status" value="1"/>
</dbReference>
<dbReference type="Pfam" id="PF01938">
    <property type="entry name" value="TRAM"/>
    <property type="match status" value="1"/>
</dbReference>
<dbReference type="Pfam" id="PF00919">
    <property type="entry name" value="UPF0004"/>
    <property type="match status" value="1"/>
</dbReference>
<dbReference type="SFLD" id="SFLDF00273">
    <property type="entry name" value="(dimethylallyl)adenosine_tRNA"/>
    <property type="match status" value="1"/>
</dbReference>
<dbReference type="SFLD" id="SFLDG01082">
    <property type="entry name" value="B12-binding_domain_containing"/>
    <property type="match status" value="1"/>
</dbReference>
<dbReference type="SFLD" id="SFLDS00029">
    <property type="entry name" value="Radical_SAM"/>
    <property type="match status" value="1"/>
</dbReference>
<dbReference type="SMART" id="SM00729">
    <property type="entry name" value="Elp3"/>
    <property type="match status" value="1"/>
</dbReference>
<dbReference type="SUPFAM" id="SSF102114">
    <property type="entry name" value="Radical SAM enzymes"/>
    <property type="match status" value="1"/>
</dbReference>
<dbReference type="PROSITE" id="PS51449">
    <property type="entry name" value="MTTASE_N"/>
    <property type="match status" value="1"/>
</dbReference>
<dbReference type="PROSITE" id="PS01278">
    <property type="entry name" value="MTTASE_RADICAL"/>
    <property type="match status" value="1"/>
</dbReference>
<dbReference type="PROSITE" id="PS51918">
    <property type="entry name" value="RADICAL_SAM"/>
    <property type="match status" value="1"/>
</dbReference>
<dbReference type="PROSITE" id="PS50926">
    <property type="entry name" value="TRAM"/>
    <property type="match status" value="1"/>
</dbReference>
<protein>
    <recommendedName>
        <fullName evidence="1">tRNA-2-methylthio-N(6)-dimethylallyladenosine synthase</fullName>
        <ecNumber evidence="1">2.8.4.3</ecNumber>
    </recommendedName>
    <alternativeName>
        <fullName evidence="1">(Dimethylallyl)adenosine tRNA methylthiotransferase MiaB</fullName>
    </alternativeName>
    <alternativeName>
        <fullName evidence="1">tRNA-i(6)A37 methylthiotransferase</fullName>
    </alternativeName>
</protein>
<keyword id="KW-0004">4Fe-4S</keyword>
<keyword id="KW-0963">Cytoplasm</keyword>
<keyword id="KW-0408">Iron</keyword>
<keyword id="KW-0411">Iron-sulfur</keyword>
<keyword id="KW-0479">Metal-binding</keyword>
<keyword id="KW-1185">Reference proteome</keyword>
<keyword id="KW-0949">S-adenosyl-L-methionine</keyword>
<keyword id="KW-0808">Transferase</keyword>
<keyword id="KW-0819">tRNA processing</keyword>
<proteinExistence type="inferred from homology"/>
<comment type="function">
    <text evidence="1">Catalyzes the methylthiolation of N6-(dimethylallyl)adenosine (i(6)A), leading to the formation of 2-methylthio-N6-(dimethylallyl)adenosine (ms(2)i(6)A) at position 37 in tRNAs that read codons beginning with uridine.</text>
</comment>
<comment type="catalytic activity">
    <reaction evidence="1">
        <text>N(6)-dimethylallyladenosine(37) in tRNA + (sulfur carrier)-SH + AH2 + 2 S-adenosyl-L-methionine = 2-methylsulfanyl-N(6)-dimethylallyladenosine(37) in tRNA + (sulfur carrier)-H + 5'-deoxyadenosine + L-methionine + A + S-adenosyl-L-homocysteine + 2 H(+)</text>
        <dbReference type="Rhea" id="RHEA:37067"/>
        <dbReference type="Rhea" id="RHEA-COMP:10375"/>
        <dbReference type="Rhea" id="RHEA-COMP:10376"/>
        <dbReference type="Rhea" id="RHEA-COMP:14737"/>
        <dbReference type="Rhea" id="RHEA-COMP:14739"/>
        <dbReference type="ChEBI" id="CHEBI:13193"/>
        <dbReference type="ChEBI" id="CHEBI:15378"/>
        <dbReference type="ChEBI" id="CHEBI:17319"/>
        <dbReference type="ChEBI" id="CHEBI:17499"/>
        <dbReference type="ChEBI" id="CHEBI:29917"/>
        <dbReference type="ChEBI" id="CHEBI:57844"/>
        <dbReference type="ChEBI" id="CHEBI:57856"/>
        <dbReference type="ChEBI" id="CHEBI:59789"/>
        <dbReference type="ChEBI" id="CHEBI:64428"/>
        <dbReference type="ChEBI" id="CHEBI:74415"/>
        <dbReference type="ChEBI" id="CHEBI:74417"/>
        <dbReference type="EC" id="2.8.4.3"/>
    </reaction>
</comment>
<comment type="cofactor">
    <cofactor evidence="1">
        <name>[4Fe-4S] cluster</name>
        <dbReference type="ChEBI" id="CHEBI:49883"/>
    </cofactor>
    <text evidence="1">Binds 2 [4Fe-4S] clusters. One cluster is coordinated with 3 cysteines and an exchangeable S-adenosyl-L-methionine.</text>
</comment>
<comment type="subunit">
    <text evidence="1">Monomer.</text>
</comment>
<comment type="subcellular location">
    <subcellularLocation>
        <location evidence="1">Cytoplasm</location>
    </subcellularLocation>
</comment>
<comment type="similarity">
    <text evidence="1">Belongs to the methylthiotransferase family. MiaB subfamily.</text>
</comment>
<name>MIAB_CLONN</name>
<feature type="chain" id="PRO_0000374229" description="tRNA-2-methylthio-N(6)-dimethylallyladenosine synthase">
    <location>
        <begin position="1"/>
        <end position="452"/>
    </location>
</feature>
<feature type="domain" description="MTTase N-terminal" evidence="1">
    <location>
        <begin position="16"/>
        <end position="134"/>
    </location>
</feature>
<feature type="domain" description="Radical SAM core" evidence="2">
    <location>
        <begin position="157"/>
        <end position="387"/>
    </location>
</feature>
<feature type="domain" description="TRAM" evidence="1">
    <location>
        <begin position="390"/>
        <end position="452"/>
    </location>
</feature>
<feature type="binding site" evidence="1">
    <location>
        <position position="25"/>
    </location>
    <ligand>
        <name>[4Fe-4S] cluster</name>
        <dbReference type="ChEBI" id="CHEBI:49883"/>
        <label>1</label>
    </ligand>
</feature>
<feature type="binding site" evidence="1">
    <location>
        <position position="61"/>
    </location>
    <ligand>
        <name>[4Fe-4S] cluster</name>
        <dbReference type="ChEBI" id="CHEBI:49883"/>
        <label>1</label>
    </ligand>
</feature>
<feature type="binding site" evidence="1">
    <location>
        <position position="95"/>
    </location>
    <ligand>
        <name>[4Fe-4S] cluster</name>
        <dbReference type="ChEBI" id="CHEBI:49883"/>
        <label>1</label>
    </ligand>
</feature>
<feature type="binding site" evidence="1">
    <location>
        <position position="171"/>
    </location>
    <ligand>
        <name>[4Fe-4S] cluster</name>
        <dbReference type="ChEBI" id="CHEBI:49883"/>
        <label>2</label>
        <note>4Fe-4S-S-AdoMet</note>
    </ligand>
</feature>
<feature type="binding site" evidence="1">
    <location>
        <position position="175"/>
    </location>
    <ligand>
        <name>[4Fe-4S] cluster</name>
        <dbReference type="ChEBI" id="CHEBI:49883"/>
        <label>2</label>
        <note>4Fe-4S-S-AdoMet</note>
    </ligand>
</feature>
<feature type="binding site" evidence="1">
    <location>
        <position position="178"/>
    </location>
    <ligand>
        <name>[4Fe-4S] cluster</name>
        <dbReference type="ChEBI" id="CHEBI:49883"/>
        <label>2</label>
        <note>4Fe-4S-S-AdoMet</note>
    </ligand>
</feature>